<organism>
    <name type="scientific">Saccharomyces cerevisiae (strain ATCC 204508 / S288c)</name>
    <name type="common">Baker's yeast</name>
    <dbReference type="NCBI Taxonomy" id="559292"/>
    <lineage>
        <taxon>Eukaryota</taxon>
        <taxon>Fungi</taxon>
        <taxon>Dikarya</taxon>
        <taxon>Ascomycota</taxon>
        <taxon>Saccharomycotina</taxon>
        <taxon>Saccharomycetes</taxon>
        <taxon>Saccharomycetales</taxon>
        <taxon>Saccharomycetaceae</taxon>
        <taxon>Saccharomyces</taxon>
    </lineage>
</organism>
<name>MRP10_YEAST</name>
<accession>O75012</accession>
<accession>D6VRV0</accession>
<proteinExistence type="evidence at protein level"/>
<dbReference type="EMBL" id="Z74093">
    <property type="protein sequence ID" value="CAA98605.1"/>
    <property type="molecule type" value="Genomic_DNA"/>
</dbReference>
<dbReference type="EMBL" id="Z74094">
    <property type="protein sequence ID" value="CAA98607.1"/>
    <property type="molecule type" value="Genomic_DNA"/>
</dbReference>
<dbReference type="EMBL" id="AY558524">
    <property type="protein sequence ID" value="AAS56850.1"/>
    <property type="molecule type" value="Genomic_DNA"/>
</dbReference>
<dbReference type="EMBL" id="BK006938">
    <property type="protein sequence ID" value="DAA11810.1"/>
    <property type="molecule type" value="Genomic_DNA"/>
</dbReference>
<dbReference type="PIR" id="S77567">
    <property type="entry name" value="S77567"/>
</dbReference>
<dbReference type="RefSeq" id="NP_010238.1">
    <property type="nucleotide sequence ID" value="NM_001184304.1"/>
</dbReference>
<dbReference type="PDB" id="5MRC">
    <property type="method" value="EM"/>
    <property type="resolution" value="3.25 A"/>
    <property type="chains" value="ZZ=5-95"/>
</dbReference>
<dbReference type="PDB" id="5MRE">
    <property type="method" value="EM"/>
    <property type="resolution" value="3.75 A"/>
    <property type="chains" value="ZZ=5-95"/>
</dbReference>
<dbReference type="PDB" id="5MRF">
    <property type="method" value="EM"/>
    <property type="resolution" value="4.97 A"/>
    <property type="chains" value="ZZ=5-95"/>
</dbReference>
<dbReference type="PDB" id="8D8K">
    <property type="method" value="EM"/>
    <property type="resolution" value="3.13 A"/>
    <property type="chains" value="Z=1-95"/>
</dbReference>
<dbReference type="PDB" id="8D8L">
    <property type="method" value="EM"/>
    <property type="resolution" value="2.60 A"/>
    <property type="chains" value="Z=1-95"/>
</dbReference>
<dbReference type="PDB" id="8OM2">
    <property type="method" value="EM"/>
    <property type="resolution" value="2.57 A"/>
    <property type="chains" value="Z=1-95"/>
</dbReference>
<dbReference type="PDB" id="8OM3">
    <property type="method" value="EM"/>
    <property type="resolution" value="2.87 A"/>
    <property type="chains" value="Z=1-95"/>
</dbReference>
<dbReference type="PDB" id="8OM4">
    <property type="method" value="EM"/>
    <property type="resolution" value="2.32 A"/>
    <property type="chains" value="Z=1-95"/>
</dbReference>
<dbReference type="PDB" id="8R8B">
    <property type="method" value="X-ray"/>
    <property type="resolution" value="1.81 A"/>
    <property type="chains" value="aaa/bbb/ccc/ddd/eee/fff/ggg/hhh/iii/jjj/kkk/lll/mmm/nnn/ooo/ppp/qqq/rrr/sss/ttt/uuu/vvv/www/xxx=16-21"/>
</dbReference>
<dbReference type="PDBsum" id="5MRC"/>
<dbReference type="PDBsum" id="5MRE"/>
<dbReference type="PDBsum" id="5MRF"/>
<dbReference type="PDBsum" id="8D8K"/>
<dbReference type="PDBsum" id="8D8L"/>
<dbReference type="PDBsum" id="8OM2"/>
<dbReference type="PDBsum" id="8OM3"/>
<dbReference type="PDBsum" id="8OM4"/>
<dbReference type="PDBsum" id="8R8B"/>
<dbReference type="EMDB" id="EMD-16966"/>
<dbReference type="EMDB" id="EMD-16967"/>
<dbReference type="EMDB" id="EMD-16968"/>
<dbReference type="EMDB" id="EMD-27250"/>
<dbReference type="EMDB" id="EMD-27251"/>
<dbReference type="EMDB" id="EMD-3551"/>
<dbReference type="EMDB" id="EMD-3552"/>
<dbReference type="EMDB" id="EMD-3553"/>
<dbReference type="SMR" id="O75012"/>
<dbReference type="BioGRID" id="32013">
    <property type="interactions" value="150"/>
</dbReference>
<dbReference type="ComplexPortal" id="CPX-1603">
    <property type="entry name" value="37S mitochondrial small ribosomal subunit"/>
</dbReference>
<dbReference type="DIP" id="DIP-6679N"/>
<dbReference type="FunCoup" id="O75012">
    <property type="interactions" value="150"/>
</dbReference>
<dbReference type="IntAct" id="O75012">
    <property type="interactions" value="45"/>
</dbReference>
<dbReference type="MINT" id="O75012"/>
<dbReference type="STRING" id="4932.YDL045W-A"/>
<dbReference type="iPTMnet" id="O75012"/>
<dbReference type="PaxDb" id="4932-YDL045W-A"/>
<dbReference type="PeptideAtlas" id="O75012"/>
<dbReference type="TopDownProteomics" id="O75012"/>
<dbReference type="EnsemblFungi" id="YDL045W-A_mRNA">
    <property type="protein sequence ID" value="YDL045W-A"/>
    <property type="gene ID" value="YDL045W-A"/>
</dbReference>
<dbReference type="GeneID" id="851515"/>
<dbReference type="KEGG" id="sce:YDL045W-A"/>
<dbReference type="AGR" id="SGD:S000006430"/>
<dbReference type="SGD" id="S000006430">
    <property type="gene designation" value="MRP10"/>
</dbReference>
<dbReference type="VEuPathDB" id="FungiDB:YDL045W-A"/>
<dbReference type="eggNOG" id="ENOG502SBQ7">
    <property type="taxonomic scope" value="Eukaryota"/>
</dbReference>
<dbReference type="HOGENOM" id="CLU_162186_0_0_1"/>
<dbReference type="InParanoid" id="O75012"/>
<dbReference type="OMA" id="INYHAAR"/>
<dbReference type="OrthoDB" id="2210at2759"/>
<dbReference type="BioCyc" id="YEAST:G3O-30052-MONOMER"/>
<dbReference type="BioGRID-ORCS" id="851515">
    <property type="hits" value="1 hit in 10 CRISPR screens"/>
</dbReference>
<dbReference type="PRO" id="PR:O75012"/>
<dbReference type="Proteomes" id="UP000002311">
    <property type="component" value="Chromosome IV"/>
</dbReference>
<dbReference type="RNAct" id="O75012">
    <property type="molecule type" value="protein"/>
</dbReference>
<dbReference type="GO" id="GO:0005743">
    <property type="term" value="C:mitochondrial inner membrane"/>
    <property type="evidence" value="ECO:0000303"/>
    <property type="project" value="ComplexPortal"/>
</dbReference>
<dbReference type="GO" id="GO:0005763">
    <property type="term" value="C:mitochondrial small ribosomal subunit"/>
    <property type="evidence" value="ECO:0000314"/>
    <property type="project" value="SGD"/>
</dbReference>
<dbReference type="GO" id="GO:0003735">
    <property type="term" value="F:structural constituent of ribosome"/>
    <property type="evidence" value="ECO:0000314"/>
    <property type="project" value="SGD"/>
</dbReference>
<dbReference type="GO" id="GO:0032543">
    <property type="term" value="P:mitochondrial translation"/>
    <property type="evidence" value="ECO:0000315"/>
    <property type="project" value="SGD"/>
</dbReference>
<dbReference type="InterPro" id="IPR010625">
    <property type="entry name" value="CHCH"/>
</dbReference>
<dbReference type="InterPro" id="IPR017264">
    <property type="entry name" value="Ribosomal_mS37_fun"/>
</dbReference>
<dbReference type="PANTHER" id="PTHR28066">
    <property type="entry name" value="37S RIBOSOMAL PROTEIN MRP10, MITOCHONDRIAL"/>
    <property type="match status" value="1"/>
</dbReference>
<dbReference type="PANTHER" id="PTHR28066:SF1">
    <property type="entry name" value="SMALL RIBOSOMAL SUBUNIT PROTEIN MS37"/>
    <property type="match status" value="1"/>
</dbReference>
<dbReference type="Pfam" id="PF06747">
    <property type="entry name" value="CHCH"/>
    <property type="match status" value="1"/>
</dbReference>
<dbReference type="PIRSF" id="PIRSF037706">
    <property type="entry name" value="MRP10"/>
    <property type="match status" value="1"/>
</dbReference>
<dbReference type="PROSITE" id="PS51808">
    <property type="entry name" value="CHCH"/>
    <property type="match status" value="1"/>
</dbReference>
<comment type="function">
    <text evidence="7 11 12">Component of the mitochondrial ribosome (mitoribosome), a dedicated translation machinery responsible for the synthesis of mitochondrial genome-encoded proteins, including at least some of the essential transmembrane subunits of the mitochondrial respiratory chain. The mitoribosomes are attached to the mitochondrial inner membrane and translation products are cotranslationally integrated into the membrane.</text>
</comment>
<comment type="subunit">
    <text evidence="4 6 7 8">Component of the mitochondrial small ribosomal subunit (mt-SSU). Mature yeast 74S mitochondrial ribosomes consist of a small (37S) and a large (54S) subunit. The 37S small subunit contains a 15S ribosomal RNA (15S mt-rRNA) and 34 different proteins. The 54S large subunit contains a 21S rRNA (21S mt-rRNA) and 46 different proteins.</text>
</comment>
<comment type="subcellular location">
    <subcellularLocation>
        <location evidence="2">Mitochondrion</location>
    </subcellularLocation>
    <subcellularLocation>
        <location evidence="4">Mitochondrion matrix</location>
    </subcellularLocation>
    <text evidence="5">Mitoribosomes are tethered to the mitochondrial inner membrane and spatially aligned with the membrane insertion machinery through two distinct membrane contact sites, formed by the 21S rRNA expansion segment 96-ES1 and the inner membrane protein MBA1.</text>
</comment>
<comment type="miscellaneous">
    <text evidence="3">Present with 259 molecules/cell in log phase SD medium.</text>
</comment>
<comment type="similarity">
    <text evidence="10">Belongs to the mitochondrion-specific ribosomal protein mS37 family.</text>
</comment>
<feature type="initiator methionine" description="Removed" evidence="8">
    <location>
        <position position="1"/>
    </location>
</feature>
<feature type="chain" id="PRO_0000042818" description="Small ribosomal subunit protein mS37">
    <location>
        <begin position="2"/>
        <end position="95"/>
    </location>
</feature>
<feature type="domain" description="CHCH" evidence="1">
    <location>
        <begin position="27"/>
        <end position="69"/>
    </location>
</feature>
<feature type="short sequence motif" description="Cx9C motif 1" evidence="1">
    <location>
        <begin position="30"/>
        <end position="40"/>
    </location>
</feature>
<feature type="short sequence motif" description="Cx9C motif 2" evidence="1">
    <location>
        <begin position="51"/>
        <end position="61"/>
    </location>
</feature>
<feature type="disulfide bond" evidence="1">
    <location>
        <begin position="30"/>
        <end position="61"/>
    </location>
</feature>
<feature type="disulfide bond" evidence="1">
    <location>
        <begin position="40"/>
        <end position="51"/>
    </location>
</feature>
<feature type="helix" evidence="13">
    <location>
        <begin position="29"/>
        <end position="44"/>
    </location>
</feature>
<feature type="helix" evidence="13">
    <location>
        <begin position="49"/>
        <end position="51"/>
    </location>
</feature>
<feature type="helix" evidence="13">
    <location>
        <begin position="52"/>
        <end position="62"/>
    </location>
</feature>
<feature type="helix" evidence="13">
    <location>
        <begin position="78"/>
        <end position="89"/>
    </location>
</feature>
<keyword id="KW-0002">3D-structure</keyword>
<keyword id="KW-0903">Direct protein sequencing</keyword>
<keyword id="KW-1015">Disulfide bond</keyword>
<keyword id="KW-0496">Mitochondrion</keyword>
<keyword id="KW-1185">Reference proteome</keyword>
<keyword id="KW-0687">Ribonucleoprotein</keyword>
<keyword id="KW-0689">Ribosomal protein</keyword>
<evidence type="ECO:0000255" key="1">
    <source>
        <dbReference type="PROSITE-ProRule" id="PRU01150"/>
    </source>
</evidence>
<evidence type="ECO:0000269" key="2">
    <source>
    </source>
</evidence>
<evidence type="ECO:0000269" key="3">
    <source>
    </source>
</evidence>
<evidence type="ECO:0000269" key="4">
    <source>
    </source>
</evidence>
<evidence type="ECO:0000269" key="5">
    <source>
    </source>
</evidence>
<evidence type="ECO:0000269" key="6">
    <source>
    </source>
</evidence>
<evidence type="ECO:0000269" key="7">
    <source>
    </source>
</evidence>
<evidence type="ECO:0000269" key="8">
    <source>
    </source>
</evidence>
<evidence type="ECO:0000303" key="9">
    <source>
    </source>
</evidence>
<evidence type="ECO:0000305" key="10"/>
<evidence type="ECO:0000305" key="11">
    <source>
    </source>
</evidence>
<evidence type="ECO:0000305" key="12">
    <source>
    </source>
</evidence>
<evidence type="ECO:0007829" key="13">
    <source>
        <dbReference type="PDB" id="8D8L"/>
    </source>
</evidence>
<protein>
    <recommendedName>
        <fullName evidence="9">Small ribosomal subunit protein mS37</fullName>
    </recommendedName>
    <alternativeName>
        <fullName>37S ribosomal protein MRP10, mitochondrial</fullName>
    </alternativeName>
    <alternativeName>
        <fullName>YmS-T</fullName>
    </alternativeName>
</protein>
<gene>
    <name type="primary">MRP10</name>
    <name type="ordered locus">YDL045W-A</name>
</gene>
<reference key="1">
    <citation type="journal article" date="1997" name="Curr. Genet.">
        <title>Cloning and characterization of MRP10, a yeast gene coding for a mitochondrial ribosomal protein.</title>
        <authorList>
            <person name="Jin C."/>
            <person name="Myers A.M."/>
            <person name="Tzagoloff A."/>
        </authorList>
    </citation>
    <scope>NUCLEOTIDE SEQUENCE [GENOMIC DNA]</scope>
    <scope>FUNCTION</scope>
    <scope>SUBUNIT</scope>
</reference>
<reference key="2">
    <citation type="journal article" date="1997" name="Nature">
        <title>The nucleotide sequence of Saccharomyces cerevisiae chromosome IV.</title>
        <authorList>
            <person name="Jacq C."/>
            <person name="Alt-Moerbe J."/>
            <person name="Andre B."/>
            <person name="Arnold W."/>
            <person name="Bahr A."/>
            <person name="Ballesta J.P.G."/>
            <person name="Bargues M."/>
            <person name="Baron L."/>
            <person name="Becker A."/>
            <person name="Biteau N."/>
            <person name="Bloecker H."/>
            <person name="Blugeon C."/>
            <person name="Boskovic J."/>
            <person name="Brandt P."/>
            <person name="Brueckner M."/>
            <person name="Buitrago M.J."/>
            <person name="Coster F."/>
            <person name="Delaveau T."/>
            <person name="del Rey F."/>
            <person name="Dujon B."/>
            <person name="Eide L.G."/>
            <person name="Garcia-Cantalejo J.M."/>
            <person name="Goffeau A."/>
            <person name="Gomez-Peris A."/>
            <person name="Granotier C."/>
            <person name="Hanemann V."/>
            <person name="Hankeln T."/>
            <person name="Hoheisel J.D."/>
            <person name="Jaeger W."/>
            <person name="Jimenez A."/>
            <person name="Jonniaux J.-L."/>
            <person name="Kraemer C."/>
            <person name="Kuester H."/>
            <person name="Laamanen P."/>
            <person name="Legros Y."/>
            <person name="Louis E.J."/>
            <person name="Moeller-Rieker S."/>
            <person name="Monnet A."/>
            <person name="Moro M."/>
            <person name="Mueller-Auer S."/>
            <person name="Nussbaumer B."/>
            <person name="Paricio N."/>
            <person name="Paulin L."/>
            <person name="Perea J."/>
            <person name="Perez-Alonso M."/>
            <person name="Perez-Ortin J.E."/>
            <person name="Pohl T.M."/>
            <person name="Prydz H."/>
            <person name="Purnelle B."/>
            <person name="Rasmussen S.W."/>
            <person name="Remacha M.A."/>
            <person name="Revuelta J.L."/>
            <person name="Rieger M."/>
            <person name="Salom D."/>
            <person name="Saluz H.P."/>
            <person name="Saiz J.E."/>
            <person name="Saren A.-M."/>
            <person name="Schaefer M."/>
            <person name="Scharfe M."/>
            <person name="Schmidt E.R."/>
            <person name="Schneider C."/>
            <person name="Scholler P."/>
            <person name="Schwarz S."/>
            <person name="Soler-Mira A."/>
            <person name="Urrestarazu L.A."/>
            <person name="Verhasselt P."/>
            <person name="Vissers S."/>
            <person name="Voet M."/>
            <person name="Volckaert G."/>
            <person name="Wagner G."/>
            <person name="Wambutt R."/>
            <person name="Wedler E."/>
            <person name="Wedler H."/>
            <person name="Woelfl S."/>
            <person name="Harris D.E."/>
            <person name="Bowman S."/>
            <person name="Brown D."/>
            <person name="Churcher C.M."/>
            <person name="Connor R."/>
            <person name="Dedman K."/>
            <person name="Gentles S."/>
            <person name="Hamlin N."/>
            <person name="Hunt S."/>
            <person name="Jones L."/>
            <person name="McDonald S."/>
            <person name="Murphy L.D."/>
            <person name="Niblett D."/>
            <person name="Odell C."/>
            <person name="Oliver K."/>
            <person name="Rajandream M.A."/>
            <person name="Richards C."/>
            <person name="Shore L."/>
            <person name="Walsh S.V."/>
            <person name="Barrell B.G."/>
            <person name="Dietrich F.S."/>
            <person name="Mulligan J.T."/>
            <person name="Allen E."/>
            <person name="Araujo R."/>
            <person name="Aviles E."/>
            <person name="Berno A."/>
            <person name="Carpenter J."/>
            <person name="Chen E."/>
            <person name="Cherry J.M."/>
            <person name="Chung E."/>
            <person name="Duncan M."/>
            <person name="Hunicke-Smith S."/>
            <person name="Hyman R.W."/>
            <person name="Komp C."/>
            <person name="Lashkari D."/>
            <person name="Lew H."/>
            <person name="Lin D."/>
            <person name="Mosedale D."/>
            <person name="Nakahara K."/>
            <person name="Namath A."/>
            <person name="Oefner P."/>
            <person name="Oh C."/>
            <person name="Petel F.X."/>
            <person name="Roberts D."/>
            <person name="Schramm S."/>
            <person name="Schroeder M."/>
            <person name="Shogren T."/>
            <person name="Shroff N."/>
            <person name="Winant A."/>
            <person name="Yelton M.A."/>
            <person name="Botstein D."/>
            <person name="Davis R.W."/>
            <person name="Johnston M."/>
            <person name="Andrews S."/>
            <person name="Brinkman R."/>
            <person name="Cooper J."/>
            <person name="Ding H."/>
            <person name="Du Z."/>
            <person name="Favello A."/>
            <person name="Fulton L."/>
            <person name="Gattung S."/>
            <person name="Greco T."/>
            <person name="Hallsworth K."/>
            <person name="Hawkins J."/>
            <person name="Hillier L.W."/>
            <person name="Jier M."/>
            <person name="Johnson D."/>
            <person name="Johnston L."/>
            <person name="Kirsten J."/>
            <person name="Kucaba T."/>
            <person name="Langston Y."/>
            <person name="Latreille P."/>
            <person name="Le T."/>
            <person name="Mardis E."/>
            <person name="Menezes S."/>
            <person name="Miller N."/>
            <person name="Nhan M."/>
            <person name="Pauley A."/>
            <person name="Peluso D."/>
            <person name="Rifkin L."/>
            <person name="Riles L."/>
            <person name="Taich A."/>
            <person name="Trevaskis E."/>
            <person name="Vignati D."/>
            <person name="Wilcox L."/>
            <person name="Wohldman P."/>
            <person name="Vaudin M."/>
            <person name="Wilson R."/>
            <person name="Waterston R."/>
            <person name="Albermann K."/>
            <person name="Hani J."/>
            <person name="Heumann K."/>
            <person name="Kleine K."/>
            <person name="Mewes H.-W."/>
            <person name="Zollner A."/>
            <person name="Zaccaria P."/>
        </authorList>
    </citation>
    <scope>NUCLEOTIDE SEQUENCE [LARGE SCALE GENOMIC DNA]</scope>
    <source>
        <strain>ATCC 204508 / S288c</strain>
    </source>
</reference>
<reference key="3">
    <citation type="journal article" date="2014" name="G3 (Bethesda)">
        <title>The reference genome sequence of Saccharomyces cerevisiae: Then and now.</title>
        <authorList>
            <person name="Engel S.R."/>
            <person name="Dietrich F.S."/>
            <person name="Fisk D.G."/>
            <person name="Binkley G."/>
            <person name="Balakrishnan R."/>
            <person name="Costanzo M.C."/>
            <person name="Dwight S.S."/>
            <person name="Hitz B.C."/>
            <person name="Karra K."/>
            <person name="Nash R.S."/>
            <person name="Weng S."/>
            <person name="Wong E.D."/>
            <person name="Lloyd P."/>
            <person name="Skrzypek M.S."/>
            <person name="Miyasato S.R."/>
            <person name="Simison M."/>
            <person name="Cherry J.M."/>
        </authorList>
    </citation>
    <scope>GENOME REANNOTATION</scope>
    <source>
        <strain>ATCC 204508 / S288c</strain>
    </source>
</reference>
<reference key="4">
    <citation type="journal article" date="2007" name="Genome Res.">
        <title>Approaching a complete repository of sequence-verified protein-encoding clones for Saccharomyces cerevisiae.</title>
        <authorList>
            <person name="Hu Y."/>
            <person name="Rolfs A."/>
            <person name="Bhullar B."/>
            <person name="Murthy T.V.S."/>
            <person name="Zhu C."/>
            <person name="Berger M.F."/>
            <person name="Camargo A.A."/>
            <person name="Kelley F."/>
            <person name="McCarron S."/>
            <person name="Jepson D."/>
            <person name="Richardson A."/>
            <person name="Raphael J."/>
            <person name="Moreira D."/>
            <person name="Taycher E."/>
            <person name="Zuo D."/>
            <person name="Mohr S."/>
            <person name="Kane M.F."/>
            <person name="Williamson J."/>
            <person name="Simpson A.J.G."/>
            <person name="Bulyk M.L."/>
            <person name="Harlow E."/>
            <person name="Marsischky G."/>
            <person name="Kolodner R.D."/>
            <person name="LaBaer J."/>
        </authorList>
    </citation>
    <scope>NUCLEOTIDE SEQUENCE [GENOMIC DNA]</scope>
    <source>
        <strain>ATCC 204508 / S288c</strain>
    </source>
</reference>
<reference key="5">
    <citation type="journal article" date="1997" name="Eur. J. Biochem.">
        <title>Identification and characterization of the genes for mitochondrial ribosomal proteins of Saccharomyces cerevisiae.</title>
        <authorList>
            <person name="Kitakawa M."/>
            <person name="Graack H.-R."/>
            <person name="Grohmann L."/>
            <person name="Goldschmidt-Reisin S."/>
            <person name="Herfurth E."/>
            <person name="Wittmann-Liebold B."/>
            <person name="Nishimura T."/>
            <person name="Isono K."/>
        </authorList>
    </citation>
    <scope>PROTEIN SEQUENCE OF 2-21</scope>
    <scope>SUBUNIT</scope>
    <source>
        <strain>07173</strain>
    </source>
</reference>
<reference key="6">
    <citation type="journal article" date="2003" name="Nature">
        <title>Global analysis of protein localization in budding yeast.</title>
        <authorList>
            <person name="Huh W.-K."/>
            <person name="Falvo J.V."/>
            <person name="Gerke L.C."/>
            <person name="Carroll A.S."/>
            <person name="Howson R.W."/>
            <person name="Weissman J.S."/>
            <person name="O'Shea E.K."/>
        </authorList>
    </citation>
    <scope>SUBCELLULAR LOCATION [LARGE SCALE ANALYSIS]</scope>
</reference>
<reference key="7">
    <citation type="journal article" date="2003" name="Nature">
        <title>Global analysis of protein expression in yeast.</title>
        <authorList>
            <person name="Ghaemmaghami S."/>
            <person name="Huh W.-K."/>
            <person name="Bower K."/>
            <person name="Howson R.W."/>
            <person name="Belle A."/>
            <person name="Dephoure N."/>
            <person name="O'Shea E.K."/>
            <person name="Weissman J.S."/>
        </authorList>
    </citation>
    <scope>LEVEL OF PROTEIN EXPRESSION [LARGE SCALE ANALYSIS]</scope>
</reference>
<reference key="8">
    <citation type="journal article" date="2014" name="Dev. Cell">
        <title>The disulfide relay of the intermembrane space oxidizes the ribosomal subunit mrp10 on its transit into the mitochondrial matrix.</title>
        <authorList>
            <person name="Longen S."/>
            <person name="Woellhaf M.W."/>
            <person name="Petrungaro C."/>
            <person name="Riemer J."/>
            <person name="Herrmann J.M."/>
        </authorList>
    </citation>
    <scope>SUBCELLULAR LOCATION</scope>
    <scope>SUBUNIT</scope>
    <scope>DISULFIDE BONDS</scope>
</reference>
<reference key="9">
    <citation type="journal article" date="2015" name="Nat. Commun.">
        <title>Organization of the mitochondrial translation machinery studied in situ by cryoelectron tomography.</title>
        <authorList>
            <person name="Pfeffer S."/>
            <person name="Woellhaf M.W."/>
            <person name="Herrmann J.M."/>
            <person name="Forster F."/>
        </authorList>
    </citation>
    <scope>SUBCELLULAR LOCATION</scope>
</reference>
<reference key="10">
    <citation type="journal article" date="2017" name="Science">
        <title>The structure of the yeast mitochondrial ribosome.</title>
        <authorList>
            <person name="Desai N."/>
            <person name="Brown A."/>
            <person name="Amunts A."/>
            <person name="Ramakrishnan V."/>
        </authorList>
    </citation>
    <scope>STRUCTURE BY ELECTRON MICROSCOPY (3.25 ANGSTROMS)</scope>
    <scope>SUBUNIT</scope>
</reference>
<sequence>MSGKPPVYRLPPLPRLKVKKPIIRQEANKCLVLMSNLLQCWSSYGHMSPKCAGLVTELKSCTSESALGKRNNVQKSNINYHAARLYDRINGKPHD</sequence>